<feature type="chain" id="PRO_0000184991" description="5-oxoprolinase subunit A 1">
    <location>
        <begin position="1"/>
        <end position="252"/>
    </location>
</feature>
<keyword id="KW-0067">ATP-binding</keyword>
<keyword id="KW-0378">Hydrolase</keyword>
<keyword id="KW-0547">Nucleotide-binding</keyword>
<evidence type="ECO:0000255" key="1">
    <source>
        <dbReference type="HAMAP-Rule" id="MF_00691"/>
    </source>
</evidence>
<name>PXPA1_BORBR</name>
<organism>
    <name type="scientific">Bordetella bronchiseptica (strain ATCC BAA-588 / NCTC 13252 / RB50)</name>
    <name type="common">Alcaligenes bronchisepticus</name>
    <dbReference type="NCBI Taxonomy" id="257310"/>
    <lineage>
        <taxon>Bacteria</taxon>
        <taxon>Pseudomonadati</taxon>
        <taxon>Pseudomonadota</taxon>
        <taxon>Betaproteobacteria</taxon>
        <taxon>Burkholderiales</taxon>
        <taxon>Alcaligenaceae</taxon>
        <taxon>Bordetella</taxon>
    </lineage>
</organism>
<proteinExistence type="inferred from homology"/>
<comment type="function">
    <text evidence="1">Catalyzes the cleavage of 5-oxoproline to form L-glutamate coupled to the hydrolysis of ATP to ADP and inorganic phosphate.</text>
</comment>
<comment type="catalytic activity">
    <reaction evidence="1">
        <text>5-oxo-L-proline + ATP + 2 H2O = L-glutamate + ADP + phosphate + H(+)</text>
        <dbReference type="Rhea" id="RHEA:10348"/>
        <dbReference type="ChEBI" id="CHEBI:15377"/>
        <dbReference type="ChEBI" id="CHEBI:15378"/>
        <dbReference type="ChEBI" id="CHEBI:29985"/>
        <dbReference type="ChEBI" id="CHEBI:30616"/>
        <dbReference type="ChEBI" id="CHEBI:43474"/>
        <dbReference type="ChEBI" id="CHEBI:58402"/>
        <dbReference type="ChEBI" id="CHEBI:456216"/>
        <dbReference type="EC" id="3.5.2.9"/>
    </reaction>
</comment>
<comment type="subunit">
    <text evidence="1">Forms a complex composed of PxpA, PxpB and PxpC.</text>
</comment>
<comment type="similarity">
    <text evidence="1">Belongs to the LamB/PxpA family.</text>
</comment>
<accession>Q7WF01</accession>
<gene>
    <name evidence="1" type="primary">pxpA1</name>
    <name type="ordered locus">BB4479</name>
</gene>
<dbReference type="EC" id="3.5.2.9" evidence="1"/>
<dbReference type="EMBL" id="BX640450">
    <property type="protein sequence ID" value="CAE34842.1"/>
    <property type="molecule type" value="Genomic_DNA"/>
</dbReference>
<dbReference type="RefSeq" id="WP_003815133.1">
    <property type="nucleotide sequence ID" value="NC_002927.3"/>
</dbReference>
<dbReference type="SMR" id="Q7WF01"/>
<dbReference type="KEGG" id="bbr:BB4479"/>
<dbReference type="eggNOG" id="COG1540">
    <property type="taxonomic scope" value="Bacteria"/>
</dbReference>
<dbReference type="HOGENOM" id="CLU_069535_0_0_4"/>
<dbReference type="Proteomes" id="UP000001027">
    <property type="component" value="Chromosome"/>
</dbReference>
<dbReference type="GO" id="GO:0017168">
    <property type="term" value="F:5-oxoprolinase (ATP-hydrolyzing) activity"/>
    <property type="evidence" value="ECO:0007669"/>
    <property type="project" value="UniProtKB-UniRule"/>
</dbReference>
<dbReference type="GO" id="GO:0005524">
    <property type="term" value="F:ATP binding"/>
    <property type="evidence" value="ECO:0007669"/>
    <property type="project" value="UniProtKB-UniRule"/>
</dbReference>
<dbReference type="GO" id="GO:0005975">
    <property type="term" value="P:carbohydrate metabolic process"/>
    <property type="evidence" value="ECO:0007669"/>
    <property type="project" value="InterPro"/>
</dbReference>
<dbReference type="CDD" id="cd10787">
    <property type="entry name" value="LamB_YcsF_like"/>
    <property type="match status" value="1"/>
</dbReference>
<dbReference type="Gene3D" id="3.20.20.370">
    <property type="entry name" value="Glycoside hydrolase/deacetylase"/>
    <property type="match status" value="1"/>
</dbReference>
<dbReference type="HAMAP" id="MF_00691">
    <property type="entry name" value="PxpA"/>
    <property type="match status" value="1"/>
</dbReference>
<dbReference type="InterPro" id="IPR011330">
    <property type="entry name" value="Glyco_hydro/deAcase_b/a-brl"/>
</dbReference>
<dbReference type="InterPro" id="IPR005501">
    <property type="entry name" value="LamB/YcsF/PxpA-like"/>
</dbReference>
<dbReference type="NCBIfam" id="NF003814">
    <property type="entry name" value="PRK05406.1-3"/>
    <property type="match status" value="1"/>
</dbReference>
<dbReference type="NCBIfam" id="NF003816">
    <property type="entry name" value="PRK05406.1-5"/>
    <property type="match status" value="1"/>
</dbReference>
<dbReference type="PANTHER" id="PTHR30292:SF0">
    <property type="entry name" value="5-OXOPROLINASE SUBUNIT A"/>
    <property type="match status" value="1"/>
</dbReference>
<dbReference type="PANTHER" id="PTHR30292">
    <property type="entry name" value="UNCHARACTERIZED PROTEIN YBGL-RELATED"/>
    <property type="match status" value="1"/>
</dbReference>
<dbReference type="Pfam" id="PF03746">
    <property type="entry name" value="LamB_YcsF"/>
    <property type="match status" value="1"/>
</dbReference>
<dbReference type="SUPFAM" id="SSF88713">
    <property type="entry name" value="Glycoside hydrolase/deacetylase"/>
    <property type="match status" value="1"/>
</dbReference>
<protein>
    <recommendedName>
        <fullName evidence="1">5-oxoprolinase subunit A 1</fullName>
        <shortName evidence="1">5-OPase subunit A 1</shortName>
        <ecNumber evidence="1">3.5.2.9</ecNumber>
    </recommendedName>
    <alternativeName>
        <fullName evidence="1">5-oxoprolinase (ATP-hydrolyzing) subunit A 1</fullName>
    </alternativeName>
</protein>
<reference key="1">
    <citation type="journal article" date="2003" name="Nat. Genet.">
        <title>Comparative analysis of the genome sequences of Bordetella pertussis, Bordetella parapertussis and Bordetella bronchiseptica.</title>
        <authorList>
            <person name="Parkhill J."/>
            <person name="Sebaihia M."/>
            <person name="Preston A."/>
            <person name="Murphy L.D."/>
            <person name="Thomson N.R."/>
            <person name="Harris D.E."/>
            <person name="Holden M.T.G."/>
            <person name="Churcher C.M."/>
            <person name="Bentley S.D."/>
            <person name="Mungall K.L."/>
            <person name="Cerdeno-Tarraga A.-M."/>
            <person name="Temple L."/>
            <person name="James K.D."/>
            <person name="Harris B."/>
            <person name="Quail M.A."/>
            <person name="Achtman M."/>
            <person name="Atkin R."/>
            <person name="Baker S."/>
            <person name="Basham D."/>
            <person name="Bason N."/>
            <person name="Cherevach I."/>
            <person name="Chillingworth T."/>
            <person name="Collins M."/>
            <person name="Cronin A."/>
            <person name="Davis P."/>
            <person name="Doggett J."/>
            <person name="Feltwell T."/>
            <person name="Goble A."/>
            <person name="Hamlin N."/>
            <person name="Hauser H."/>
            <person name="Holroyd S."/>
            <person name="Jagels K."/>
            <person name="Leather S."/>
            <person name="Moule S."/>
            <person name="Norberczak H."/>
            <person name="O'Neil S."/>
            <person name="Ormond D."/>
            <person name="Price C."/>
            <person name="Rabbinowitsch E."/>
            <person name="Rutter S."/>
            <person name="Sanders M."/>
            <person name="Saunders D."/>
            <person name="Seeger K."/>
            <person name="Sharp S."/>
            <person name="Simmonds M."/>
            <person name="Skelton J."/>
            <person name="Squares R."/>
            <person name="Squares S."/>
            <person name="Stevens K."/>
            <person name="Unwin L."/>
            <person name="Whitehead S."/>
            <person name="Barrell B.G."/>
            <person name="Maskell D.J."/>
        </authorList>
    </citation>
    <scope>NUCLEOTIDE SEQUENCE [LARGE SCALE GENOMIC DNA]</scope>
    <source>
        <strain>ATCC BAA-588 / NCTC 13252 / RB50</strain>
    </source>
</reference>
<sequence>MNPAIDLNCDMGESYGAWRMGNDEAVLQFVTSANIACGFHGGDPSTMRQTVAAALAHGVALGAHPSLPDLAGFGRRAMQITPQEAYDLVVYQVGALAGVAASQGARLHHVKAHGALYNMAAKDAALARAICQAVRDVDSDLVLYGLAGSALIDAARAIGLRAAQEVFADRTYQADGQLTPRSQPDAMITDLDQAIAQVLGMVRDGSVRTPDGQTVALQADTLCIHGDQPDALVFARGIRLALERNGIAIQAA</sequence>